<keyword id="KW-0025">Alternative splicing</keyword>
<keyword id="KW-0256">Endoplasmic reticulum</keyword>
<keyword id="KW-0349">Heme</keyword>
<keyword id="KW-0408">Iron</keyword>
<keyword id="KW-0443">Lipid metabolism</keyword>
<keyword id="KW-0472">Membrane</keyword>
<keyword id="KW-0479">Metal-binding</keyword>
<keyword id="KW-0492">Microsome</keyword>
<keyword id="KW-0503">Monooxygenase</keyword>
<keyword id="KW-0560">Oxidoreductase</keyword>
<keyword id="KW-1267">Proteomics identification</keyword>
<keyword id="KW-1185">Reference proteome</keyword>
<comment type="function">
    <text evidence="2 4 5 6 7 14 15">A cytochrome P450 monooxygenase involved in the metabolism of retinoates (RAs), the active metabolites of vitamin A, and critical signaling molecules in animals (PubMed:22020119, PubMed:9228017, PubMed:9716180). RAs exist as at least four different isomers: all-trans-RA (atRA), 9-cis-RA, 13-cis-RA, and 9,13-dicis-RA, where atRA is considered to be the biologically active isomer, although 9-cis-RA and 13-cis-RA also have activity (Probable). Catalyzes the hydroxylation of atRA primarily at C-4 and C-18, thereby contributing to the regulation of atRA homeostasis and signaling (PubMed:22020119, PubMed:9228017, PubMed:9716180). Hydroxylation of atRA limits its biological activity and initiates a degradative process leading to its eventual elimination (Probable). Involved in the convertion of atRA to all-trans-4-oxo-RA. Able to metabolize other RAs such as 9-cis, 13-cis and 9,13-di-cis RA (By similarity) (PubMed:9228017). Can oxidize all-trans-13,14-dihydroretinoate (DRA) to metabolites which could include all-trans-4-oxo-DRA, all-trans-4-hydroxy-DRA, all-trans-5,8-epoxy-DRA, and all-trans-18-hydroxy-DRA (By similarity). May play a role in the oxidative metabolism of xenobiotics such as tazarotenic acid (PubMed:26937021).</text>
</comment>
<comment type="catalytic activity">
    <reaction evidence="4">
        <text>all-trans-retinoate + reduced [NADPH--hemoprotein reductase] + O2 = all-trans-(4S)-hydroxyretinoate + oxidized [NADPH--hemoprotein reductase] + H2O + H(+)</text>
        <dbReference type="Rhea" id="RHEA:51492"/>
        <dbReference type="Rhea" id="RHEA-COMP:11964"/>
        <dbReference type="Rhea" id="RHEA-COMP:11965"/>
        <dbReference type="ChEBI" id="CHEBI:15377"/>
        <dbReference type="ChEBI" id="CHEBI:15378"/>
        <dbReference type="ChEBI" id="CHEBI:15379"/>
        <dbReference type="ChEBI" id="CHEBI:35291"/>
        <dbReference type="ChEBI" id="CHEBI:57618"/>
        <dbReference type="ChEBI" id="CHEBI:58210"/>
        <dbReference type="ChEBI" id="CHEBI:134185"/>
    </reaction>
    <physiologicalReaction direction="left-to-right" evidence="14">
        <dbReference type="Rhea" id="RHEA:51493"/>
    </physiologicalReaction>
</comment>
<comment type="catalytic activity">
    <reaction evidence="4">
        <text>all-trans-(4S)-hydroxyretinoate + reduced [NADPH--hemoprotein reductase] + O2 = all-trans-(4S,16)-dihydroxyretinoate + oxidized [NADPH--hemoprotein reductase] + H2O + H(+)</text>
        <dbReference type="Rhea" id="RHEA:51632"/>
        <dbReference type="Rhea" id="RHEA-COMP:11964"/>
        <dbReference type="Rhea" id="RHEA-COMP:11965"/>
        <dbReference type="ChEBI" id="CHEBI:15377"/>
        <dbReference type="ChEBI" id="CHEBI:15378"/>
        <dbReference type="ChEBI" id="CHEBI:15379"/>
        <dbReference type="ChEBI" id="CHEBI:57618"/>
        <dbReference type="ChEBI" id="CHEBI:58210"/>
        <dbReference type="ChEBI" id="CHEBI:134185"/>
        <dbReference type="ChEBI" id="CHEBI:134233"/>
    </reaction>
    <physiologicalReaction direction="left-to-right" evidence="14">
        <dbReference type="Rhea" id="RHEA:51633"/>
    </physiologicalReaction>
</comment>
<comment type="catalytic activity">
    <reaction evidence="4">
        <text>all-trans-retinoate + reduced [NADPH--hemoprotein reductase] + O2 = all-trans-18-hydroxyretinoate + oxidized [NADPH--hemoprotein reductase] + H2O + H(+)</text>
        <dbReference type="Rhea" id="RHEA:55856"/>
        <dbReference type="Rhea" id="RHEA-COMP:11964"/>
        <dbReference type="Rhea" id="RHEA-COMP:11965"/>
        <dbReference type="ChEBI" id="CHEBI:15377"/>
        <dbReference type="ChEBI" id="CHEBI:15378"/>
        <dbReference type="ChEBI" id="CHEBI:15379"/>
        <dbReference type="ChEBI" id="CHEBI:35291"/>
        <dbReference type="ChEBI" id="CHEBI:57618"/>
        <dbReference type="ChEBI" id="CHEBI:58210"/>
        <dbReference type="ChEBI" id="CHEBI:139258"/>
    </reaction>
    <physiologicalReaction direction="left-to-right" evidence="14">
        <dbReference type="Rhea" id="RHEA:55857"/>
    </physiologicalReaction>
</comment>
<comment type="cofactor">
    <cofactor evidence="1">
        <name>heme</name>
        <dbReference type="ChEBI" id="CHEBI:30413"/>
    </cofactor>
</comment>
<comment type="biophysicochemical properties">
    <kinetics>
        <KM evidence="4">50.1 nM for all-trans-retinoate (4-hydroxylation)</KM>
        <KM evidence="4">48.9 nM for all-trans-retinoate (18-hydroxylation)</KM>
        <KM evidence="5">0.24 uM for tazarotenic acid (tazarotenic acid sulfoxide formation)</KM>
        <KM evidence="5">0.39 uM for tazarotenic acid (hydroxytazarotenic acid formation)</KM>
        <Vmax evidence="4">9.5 pmol/min/pmol enzyme toward all-trans-retinoate (4-hydroxylation)</Vmax>
        <Vmax evidence="4">5.0 pmol/min/pmol enzyme toward all-trans-retinoate (18-hydroxylation)</Vmax>
    </kinetics>
</comment>
<comment type="subcellular location">
    <subcellularLocation>
        <location evidence="16">Endoplasmic reticulum membrane</location>
        <topology>Peripheral membrane protein</topology>
    </subcellularLocation>
    <subcellularLocation>
        <location evidence="7">Microsome membrane</location>
        <topology>Peripheral membrane protein</topology>
    </subcellularLocation>
</comment>
<comment type="alternative products">
    <event type="alternative splicing"/>
    <isoform>
        <id>O43174-1</id>
        <name>1</name>
        <sequence type="displayed"/>
    </isoform>
    <isoform>
        <id>O43174-2</id>
        <name>2</name>
        <sequence type="described" ref="VSP_045087"/>
    </isoform>
</comment>
<comment type="tissue specificity">
    <text evidence="4 8">Expressed in most fetal and adult tissues with highest levels in adult liver, heart, pituitary gland, adrenal gland, placenta and regions of the brain (PubMed:9826557). Expressed at high levels in lung, pancreas, skin and uterus (at protein level) (PubMed:22020119). Lower expression level is detected in spleen, kidney, intestine and adipose tissue (at protein level) (PubMed:22020119).</text>
</comment>
<comment type="induction">
    <text evidence="7">By retinoic acid.</text>
</comment>
<comment type="similarity">
    <text evidence="13">Belongs to the cytochrome P450 family.</text>
</comment>
<proteinExistence type="evidence at protein level"/>
<evidence type="ECO:0000250" key="1"/>
<evidence type="ECO:0000250" key="2">
    <source>
        <dbReference type="UniProtKB" id="O55127"/>
    </source>
</evidence>
<evidence type="ECO:0000255" key="3"/>
<evidence type="ECO:0000269" key="4">
    <source>
    </source>
</evidence>
<evidence type="ECO:0000269" key="5">
    <source>
    </source>
</evidence>
<evidence type="ECO:0000269" key="6">
    <source>
    </source>
</evidence>
<evidence type="ECO:0000269" key="7">
    <source>
    </source>
</evidence>
<evidence type="ECO:0000269" key="8">
    <source>
    </source>
</evidence>
<evidence type="ECO:0000303" key="9">
    <source>
    </source>
</evidence>
<evidence type="ECO:0000303" key="10">
    <source>
    </source>
</evidence>
<evidence type="ECO:0000303" key="11">
    <source>
    </source>
</evidence>
<evidence type="ECO:0000303" key="12">
    <source>
    </source>
</evidence>
<evidence type="ECO:0000305" key="13"/>
<evidence type="ECO:0000305" key="14">
    <source>
    </source>
</evidence>
<evidence type="ECO:0000305" key="15">
    <source>
    </source>
</evidence>
<evidence type="ECO:0000305" key="16">
    <source>
    </source>
</evidence>
<evidence type="ECO:0000312" key="17">
    <source>
        <dbReference type="HGNC" id="HGNC:2603"/>
    </source>
</evidence>
<reference key="1">
    <citation type="journal article" date="1997" name="J. Biol. Chem.">
        <title>cDNA cloning of human retinoic acid-metabolizing enzyme (hP450RAI) identifies a novel family of cytochromes P450.</title>
        <authorList>
            <person name="White J.A."/>
            <person name="Beckett-Jones B."/>
            <person name="Guo Y.-D."/>
            <person name="Dilworth F.J."/>
            <person name="Bonasoro J."/>
            <person name="Jones G."/>
            <person name="Petkovich M."/>
        </authorList>
    </citation>
    <scope>NUCLEOTIDE SEQUENCE [MRNA] (ISOFORM 1)</scope>
    <scope>FUNCTION</scope>
    <scope>CATALYTIC ACTIVITY</scope>
</reference>
<reference key="2">
    <citation type="journal article" date="1998" name="Cell Growth Differ.">
        <title>Human retinoic acid (RA) 4-hydroxylase (CYP26) is highly specific for all-trans-RA and can be induced through RA receptors in human breast and colon carcinoma cells.</title>
        <authorList>
            <person name="Sonneveld E."/>
            <person name="van den Brink C.E."/>
            <person name="van der Leede B.M."/>
            <person name="Schulkes R.K."/>
            <person name="Petkovich M."/>
            <person name="van der Burg B."/>
            <person name="van der Saag P.T."/>
        </authorList>
    </citation>
    <scope>NUCLEOTIDE SEQUENCE [MRNA] (ISOFORM 1)</scope>
    <scope>FUNCTION</scope>
    <scope>SUBSTRATE SPECIFICITY</scope>
    <scope>CATALYTIC ACTIVITY</scope>
    <scope>SUBCELLULAR LOCATION</scope>
</reference>
<reference key="3">
    <citation type="journal article" date="2004" name="Nat. Genet.">
        <title>Complete sequencing and characterization of 21,243 full-length human cDNAs.</title>
        <authorList>
            <person name="Ota T."/>
            <person name="Suzuki Y."/>
            <person name="Nishikawa T."/>
            <person name="Otsuki T."/>
            <person name="Sugiyama T."/>
            <person name="Irie R."/>
            <person name="Wakamatsu A."/>
            <person name="Hayashi K."/>
            <person name="Sato H."/>
            <person name="Nagai K."/>
            <person name="Kimura K."/>
            <person name="Makita H."/>
            <person name="Sekine M."/>
            <person name="Obayashi M."/>
            <person name="Nishi T."/>
            <person name="Shibahara T."/>
            <person name="Tanaka T."/>
            <person name="Ishii S."/>
            <person name="Yamamoto J."/>
            <person name="Saito K."/>
            <person name="Kawai Y."/>
            <person name="Isono Y."/>
            <person name="Nakamura Y."/>
            <person name="Nagahari K."/>
            <person name="Murakami K."/>
            <person name="Yasuda T."/>
            <person name="Iwayanagi T."/>
            <person name="Wagatsuma M."/>
            <person name="Shiratori A."/>
            <person name="Sudo H."/>
            <person name="Hosoiri T."/>
            <person name="Kaku Y."/>
            <person name="Kodaira H."/>
            <person name="Kondo H."/>
            <person name="Sugawara M."/>
            <person name="Takahashi M."/>
            <person name="Kanda K."/>
            <person name="Yokoi T."/>
            <person name="Furuya T."/>
            <person name="Kikkawa E."/>
            <person name="Omura Y."/>
            <person name="Abe K."/>
            <person name="Kamihara K."/>
            <person name="Katsuta N."/>
            <person name="Sato K."/>
            <person name="Tanikawa M."/>
            <person name="Yamazaki M."/>
            <person name="Ninomiya K."/>
            <person name="Ishibashi T."/>
            <person name="Yamashita H."/>
            <person name="Murakawa K."/>
            <person name="Fujimori K."/>
            <person name="Tanai H."/>
            <person name="Kimata M."/>
            <person name="Watanabe M."/>
            <person name="Hiraoka S."/>
            <person name="Chiba Y."/>
            <person name="Ishida S."/>
            <person name="Ono Y."/>
            <person name="Takiguchi S."/>
            <person name="Watanabe S."/>
            <person name="Yosida M."/>
            <person name="Hotuta T."/>
            <person name="Kusano J."/>
            <person name="Kanehori K."/>
            <person name="Takahashi-Fujii A."/>
            <person name="Hara H."/>
            <person name="Tanase T.-O."/>
            <person name="Nomura Y."/>
            <person name="Togiya S."/>
            <person name="Komai F."/>
            <person name="Hara R."/>
            <person name="Takeuchi K."/>
            <person name="Arita M."/>
            <person name="Imose N."/>
            <person name="Musashino K."/>
            <person name="Yuuki H."/>
            <person name="Oshima A."/>
            <person name="Sasaki N."/>
            <person name="Aotsuka S."/>
            <person name="Yoshikawa Y."/>
            <person name="Matsunawa H."/>
            <person name="Ichihara T."/>
            <person name="Shiohata N."/>
            <person name="Sano S."/>
            <person name="Moriya S."/>
            <person name="Momiyama H."/>
            <person name="Satoh N."/>
            <person name="Takami S."/>
            <person name="Terashima Y."/>
            <person name="Suzuki O."/>
            <person name="Nakagawa S."/>
            <person name="Senoh A."/>
            <person name="Mizoguchi H."/>
            <person name="Goto Y."/>
            <person name="Shimizu F."/>
            <person name="Wakebe H."/>
            <person name="Hishigaki H."/>
            <person name="Watanabe T."/>
            <person name="Sugiyama A."/>
            <person name="Takemoto M."/>
            <person name="Kawakami B."/>
            <person name="Yamazaki M."/>
            <person name="Watanabe K."/>
            <person name="Kumagai A."/>
            <person name="Itakura S."/>
            <person name="Fukuzumi Y."/>
            <person name="Fujimori Y."/>
            <person name="Komiyama M."/>
            <person name="Tashiro H."/>
            <person name="Tanigami A."/>
            <person name="Fujiwara T."/>
            <person name="Ono T."/>
            <person name="Yamada K."/>
            <person name="Fujii Y."/>
            <person name="Ozaki K."/>
            <person name="Hirao M."/>
            <person name="Ohmori Y."/>
            <person name="Kawabata A."/>
            <person name="Hikiji T."/>
            <person name="Kobatake N."/>
            <person name="Inagaki H."/>
            <person name="Ikema Y."/>
            <person name="Okamoto S."/>
            <person name="Okitani R."/>
            <person name="Kawakami T."/>
            <person name="Noguchi S."/>
            <person name="Itoh T."/>
            <person name="Shigeta K."/>
            <person name="Senba T."/>
            <person name="Matsumura K."/>
            <person name="Nakajima Y."/>
            <person name="Mizuno T."/>
            <person name="Morinaga M."/>
            <person name="Sasaki M."/>
            <person name="Togashi T."/>
            <person name="Oyama M."/>
            <person name="Hata H."/>
            <person name="Watanabe M."/>
            <person name="Komatsu T."/>
            <person name="Mizushima-Sugano J."/>
            <person name="Satoh T."/>
            <person name="Shirai Y."/>
            <person name="Takahashi Y."/>
            <person name="Nakagawa K."/>
            <person name="Okumura K."/>
            <person name="Nagase T."/>
            <person name="Nomura N."/>
            <person name="Kikuchi H."/>
            <person name="Masuho Y."/>
            <person name="Yamashita R."/>
            <person name="Nakai K."/>
            <person name="Yada T."/>
            <person name="Nakamura Y."/>
            <person name="Ohara O."/>
            <person name="Isogai T."/>
            <person name="Sugano S."/>
        </authorList>
    </citation>
    <scope>NUCLEOTIDE SEQUENCE [LARGE SCALE MRNA] (ISOFORM 2)</scope>
</reference>
<reference key="4">
    <citation type="journal article" date="2004" name="Nature">
        <title>The DNA sequence and comparative analysis of human chromosome 10.</title>
        <authorList>
            <person name="Deloukas P."/>
            <person name="Earthrowl M.E."/>
            <person name="Grafham D.V."/>
            <person name="Rubenfield M."/>
            <person name="French L."/>
            <person name="Steward C.A."/>
            <person name="Sims S.K."/>
            <person name="Jones M.C."/>
            <person name="Searle S."/>
            <person name="Scott C."/>
            <person name="Howe K."/>
            <person name="Hunt S.E."/>
            <person name="Andrews T.D."/>
            <person name="Gilbert J.G.R."/>
            <person name="Swarbreck D."/>
            <person name="Ashurst J.L."/>
            <person name="Taylor A."/>
            <person name="Battles J."/>
            <person name="Bird C.P."/>
            <person name="Ainscough R."/>
            <person name="Almeida J.P."/>
            <person name="Ashwell R.I.S."/>
            <person name="Ambrose K.D."/>
            <person name="Babbage A.K."/>
            <person name="Bagguley C.L."/>
            <person name="Bailey J."/>
            <person name="Banerjee R."/>
            <person name="Bates K."/>
            <person name="Beasley H."/>
            <person name="Bray-Allen S."/>
            <person name="Brown A.J."/>
            <person name="Brown J.Y."/>
            <person name="Burford D.C."/>
            <person name="Burrill W."/>
            <person name="Burton J."/>
            <person name="Cahill P."/>
            <person name="Camire D."/>
            <person name="Carter N.P."/>
            <person name="Chapman J.C."/>
            <person name="Clark S.Y."/>
            <person name="Clarke G."/>
            <person name="Clee C.M."/>
            <person name="Clegg S."/>
            <person name="Corby N."/>
            <person name="Coulson A."/>
            <person name="Dhami P."/>
            <person name="Dutta I."/>
            <person name="Dunn M."/>
            <person name="Faulkner L."/>
            <person name="Frankish A."/>
            <person name="Frankland J.A."/>
            <person name="Garner P."/>
            <person name="Garnett J."/>
            <person name="Gribble S."/>
            <person name="Griffiths C."/>
            <person name="Grocock R."/>
            <person name="Gustafson E."/>
            <person name="Hammond S."/>
            <person name="Harley J.L."/>
            <person name="Hart E."/>
            <person name="Heath P.D."/>
            <person name="Ho T.P."/>
            <person name="Hopkins B."/>
            <person name="Horne J."/>
            <person name="Howden P.J."/>
            <person name="Huckle E."/>
            <person name="Hynds C."/>
            <person name="Johnson C."/>
            <person name="Johnson D."/>
            <person name="Kana A."/>
            <person name="Kay M."/>
            <person name="Kimberley A.M."/>
            <person name="Kershaw J.K."/>
            <person name="Kokkinaki M."/>
            <person name="Laird G.K."/>
            <person name="Lawlor S."/>
            <person name="Lee H.M."/>
            <person name="Leongamornlert D.A."/>
            <person name="Laird G."/>
            <person name="Lloyd C."/>
            <person name="Lloyd D.M."/>
            <person name="Loveland J."/>
            <person name="Lovell J."/>
            <person name="McLaren S."/>
            <person name="McLay K.E."/>
            <person name="McMurray A."/>
            <person name="Mashreghi-Mohammadi M."/>
            <person name="Matthews L."/>
            <person name="Milne S."/>
            <person name="Nickerson T."/>
            <person name="Nguyen M."/>
            <person name="Overton-Larty E."/>
            <person name="Palmer S.A."/>
            <person name="Pearce A.V."/>
            <person name="Peck A.I."/>
            <person name="Pelan S."/>
            <person name="Phillimore B."/>
            <person name="Porter K."/>
            <person name="Rice C.M."/>
            <person name="Rogosin A."/>
            <person name="Ross M.T."/>
            <person name="Sarafidou T."/>
            <person name="Sehra H.K."/>
            <person name="Shownkeen R."/>
            <person name="Skuce C.D."/>
            <person name="Smith M."/>
            <person name="Standring L."/>
            <person name="Sycamore N."/>
            <person name="Tester J."/>
            <person name="Thorpe A."/>
            <person name="Torcasso W."/>
            <person name="Tracey A."/>
            <person name="Tromans A."/>
            <person name="Tsolas J."/>
            <person name="Wall M."/>
            <person name="Walsh J."/>
            <person name="Wang H."/>
            <person name="Weinstock K."/>
            <person name="West A.P."/>
            <person name="Willey D.L."/>
            <person name="Whitehead S.L."/>
            <person name="Wilming L."/>
            <person name="Wray P.W."/>
            <person name="Young L."/>
            <person name="Chen Y."/>
            <person name="Lovering R.C."/>
            <person name="Moschonas N.K."/>
            <person name="Siebert R."/>
            <person name="Fechtel K."/>
            <person name="Bentley D."/>
            <person name="Durbin R.M."/>
            <person name="Hubbard T."/>
            <person name="Doucette-Stamm L."/>
            <person name="Beck S."/>
            <person name="Smith D.R."/>
            <person name="Rogers J."/>
        </authorList>
    </citation>
    <scope>NUCLEOTIDE SEQUENCE [LARGE SCALE GENOMIC DNA]</scope>
</reference>
<reference key="5">
    <citation type="submission" date="2005-09" db="EMBL/GenBank/DDBJ databases">
        <authorList>
            <person name="Mural R.J."/>
            <person name="Istrail S."/>
            <person name="Sutton G.G."/>
            <person name="Florea L."/>
            <person name="Halpern A.L."/>
            <person name="Mobarry C.M."/>
            <person name="Lippert R."/>
            <person name="Walenz B."/>
            <person name="Shatkay H."/>
            <person name="Dew I."/>
            <person name="Miller J.R."/>
            <person name="Flanigan M.J."/>
            <person name="Edwards N.J."/>
            <person name="Bolanos R."/>
            <person name="Fasulo D."/>
            <person name="Halldorsson B.V."/>
            <person name="Hannenhalli S."/>
            <person name="Turner R."/>
            <person name="Yooseph S."/>
            <person name="Lu F."/>
            <person name="Nusskern D.R."/>
            <person name="Shue B.C."/>
            <person name="Zheng X.H."/>
            <person name="Zhong F."/>
            <person name="Delcher A.L."/>
            <person name="Huson D.H."/>
            <person name="Kravitz S.A."/>
            <person name="Mouchard L."/>
            <person name="Reinert K."/>
            <person name="Remington K.A."/>
            <person name="Clark A.G."/>
            <person name="Waterman M.S."/>
            <person name="Eichler E.E."/>
            <person name="Adams M.D."/>
            <person name="Hunkapiller M.W."/>
            <person name="Myers E.W."/>
            <person name="Venter J.C."/>
        </authorList>
    </citation>
    <scope>NUCLEOTIDE SEQUENCE [LARGE SCALE GENOMIC DNA]</scope>
</reference>
<reference key="6">
    <citation type="journal article" date="1998" name="Biochem. Biophys. Res. Commun.">
        <title>Expression of cytochrome P450RAI (CYP26) in human fetal hepatic and cephalic tissues.</title>
        <authorList>
            <person name="Trofimova-Griffin M.E."/>
            <person name="Juchau M.R."/>
        </authorList>
    </citation>
    <scope>TISSUE SPECIFICITY</scope>
</reference>
<reference key="7">
    <citation type="journal article" date="2012" name="Biochem. Pharmacol.">
        <title>Comparison of the function and expression of CYP26A1 and CYP26B1, the two retinoic acid hydroxylases.</title>
        <authorList>
            <person name="Topletz A.R."/>
            <person name="Thatcher J.E."/>
            <person name="Zelter A."/>
            <person name="Lutz J.D."/>
            <person name="Tay S."/>
            <person name="Nelson W.L."/>
            <person name="Isoherranen N."/>
        </authorList>
    </citation>
    <scope>FUNCTION</scope>
    <scope>CATALYTIC ACTIVITY</scope>
    <scope>TISSUE SPECIFICITY</scope>
    <scope>BIOPHYSICOCHEMICAL PROPERTIES</scope>
</reference>
<reference key="8">
    <citation type="journal article" date="2016" name="J. Pharmacol. Exp. Ther.">
        <title>Identification of tazarotenic acid as the first xenobiotic substrate of human retinoic acid hydroxylase CYP26A1 and CYP26B1.</title>
        <authorList>
            <person name="Foti R.S."/>
            <person name="Isoherranen N."/>
            <person name="Zelter A."/>
            <person name="Dickmann L.J."/>
            <person name="Buttrick B.R."/>
            <person name="Diaz P."/>
            <person name="Douguet D."/>
        </authorList>
    </citation>
    <scope>FUNCTION</scope>
    <scope>BIOPHYSICOCHEMICAL PROPERTIES</scope>
</reference>
<feature type="chain" id="PRO_0000051980" description="Cytochrome P450 26A1">
    <location>
        <begin position="1"/>
        <end position="497"/>
    </location>
</feature>
<feature type="binding site" description="axial binding residue" evidence="3">
    <location>
        <position position="442"/>
    </location>
    <ligand>
        <name>heme</name>
        <dbReference type="ChEBI" id="CHEBI:30413"/>
    </ligand>
    <ligandPart>
        <name>Fe</name>
        <dbReference type="ChEBI" id="CHEBI:18248"/>
    </ligandPart>
</feature>
<feature type="splice variant" id="VSP_045087" description="In isoform 2." evidence="9">
    <location>
        <begin position="1"/>
        <end position="69"/>
    </location>
</feature>
<feature type="sequence conflict" description="In Ref. 1; AAB88881." evidence="13" ref="1">
    <original>EH</original>
    <variation>DD</variation>
    <location>
        <begin position="104"/>
        <end position="105"/>
    </location>
</feature>
<feature type="sequence conflict" description="In Ref. 3; BAG51346." evidence="13" ref="3">
    <original>R</original>
    <variation>G</variation>
    <location>
        <position position="136"/>
    </location>
</feature>
<gene>
    <name evidence="10 17" type="primary">CYP26A1</name>
    <name type="synonym">CYP26</name>
    <name type="synonym">P450RAI1</name>
</gene>
<name>CP26A_HUMAN</name>
<accession>O43174</accession>
<accession>B3KNI4</accession>
<accession>Q5VXH9</accession>
<accession>Q5VXI0</accession>
<dbReference type="EC" id="1.14.13.-" evidence="4 5 6 7"/>
<dbReference type="EMBL" id="AF005418">
    <property type="protein sequence ID" value="AAB88881.1"/>
    <property type="molecule type" value="mRNA"/>
</dbReference>
<dbReference type="EMBL" id="AK027560">
    <property type="protein sequence ID" value="BAG51346.1"/>
    <property type="molecule type" value="mRNA"/>
</dbReference>
<dbReference type="EMBL" id="AL358613">
    <property type="status" value="NOT_ANNOTATED_CDS"/>
    <property type="molecule type" value="Genomic_DNA"/>
</dbReference>
<dbReference type="EMBL" id="CH471066">
    <property type="protein sequence ID" value="EAW50078.1"/>
    <property type="molecule type" value="Genomic_DNA"/>
</dbReference>
<dbReference type="EMBL" id="CH471066">
    <property type="protein sequence ID" value="EAW50079.1"/>
    <property type="molecule type" value="Genomic_DNA"/>
</dbReference>
<dbReference type="CCDS" id="CCDS7426.1">
    <molecule id="O43174-1"/>
</dbReference>
<dbReference type="CCDS" id="CCDS7427.1">
    <molecule id="O43174-2"/>
</dbReference>
<dbReference type="RefSeq" id="NP_000774.2">
    <molecule id="O43174-1"/>
    <property type="nucleotide sequence ID" value="NM_000783.3"/>
</dbReference>
<dbReference type="RefSeq" id="NP_476498.1">
    <molecule id="O43174-2"/>
    <property type="nucleotide sequence ID" value="NM_057157.2"/>
</dbReference>
<dbReference type="SMR" id="O43174"/>
<dbReference type="BioGRID" id="107964">
    <property type="interactions" value="16"/>
</dbReference>
<dbReference type="FunCoup" id="O43174">
    <property type="interactions" value="320"/>
</dbReference>
<dbReference type="IntAct" id="O43174">
    <property type="interactions" value="1"/>
</dbReference>
<dbReference type="STRING" id="9606.ENSP00000224356"/>
<dbReference type="BindingDB" id="O43174"/>
<dbReference type="ChEMBL" id="CHEMBL5141"/>
<dbReference type="DrugBank" id="DB13066">
    <property type="generic name" value="Liarozole"/>
</dbReference>
<dbReference type="DrugBank" id="DB13083">
    <property type="generic name" value="Talarozole"/>
</dbReference>
<dbReference type="DrugBank" id="DB00755">
    <property type="generic name" value="Tretinoin"/>
</dbReference>
<dbReference type="DrugBank" id="DB00162">
    <property type="generic name" value="Vitamin A"/>
</dbReference>
<dbReference type="DrugCentral" id="O43174"/>
<dbReference type="GuidetoPHARMACOLOGY" id="1366"/>
<dbReference type="SwissLipids" id="SLP:000001674"/>
<dbReference type="iPTMnet" id="O43174"/>
<dbReference type="PhosphoSitePlus" id="O43174"/>
<dbReference type="BioMuta" id="CYP26A1"/>
<dbReference type="jPOST" id="O43174"/>
<dbReference type="MassIVE" id="O43174"/>
<dbReference type="PaxDb" id="9606-ENSP00000224356"/>
<dbReference type="PeptideAtlas" id="O43174"/>
<dbReference type="ProteomicsDB" id="48791">
    <molecule id="O43174-1"/>
</dbReference>
<dbReference type="ProteomicsDB" id="65593"/>
<dbReference type="Antibodypedia" id="4222">
    <property type="antibodies" value="315 antibodies from 34 providers"/>
</dbReference>
<dbReference type="DNASU" id="1592"/>
<dbReference type="Ensembl" id="ENST00000224356.5">
    <molecule id="O43174-1"/>
    <property type="protein sequence ID" value="ENSP00000224356.4"/>
    <property type="gene ID" value="ENSG00000095596.12"/>
</dbReference>
<dbReference type="Ensembl" id="ENST00000371531.5">
    <molecule id="O43174-2"/>
    <property type="protein sequence ID" value="ENSP00000360586.1"/>
    <property type="gene ID" value="ENSG00000095596.12"/>
</dbReference>
<dbReference type="GeneID" id="1592"/>
<dbReference type="KEGG" id="hsa:1592"/>
<dbReference type="MANE-Select" id="ENST00000224356.5">
    <property type="protein sequence ID" value="ENSP00000224356.4"/>
    <property type="RefSeq nucleotide sequence ID" value="NM_000783.4"/>
    <property type="RefSeq protein sequence ID" value="NP_000774.2"/>
</dbReference>
<dbReference type="UCSC" id="uc001kik.1">
    <molecule id="O43174-1"/>
    <property type="organism name" value="human"/>
</dbReference>
<dbReference type="AGR" id="HGNC:2603"/>
<dbReference type="CTD" id="1592"/>
<dbReference type="DisGeNET" id="1592"/>
<dbReference type="GeneCards" id="CYP26A1"/>
<dbReference type="HGNC" id="HGNC:2603">
    <property type="gene designation" value="CYP26A1"/>
</dbReference>
<dbReference type="HPA" id="ENSG00000095596">
    <property type="expression patterns" value="Tissue enriched (liver)"/>
</dbReference>
<dbReference type="MIM" id="602239">
    <property type="type" value="gene"/>
</dbReference>
<dbReference type="neXtProt" id="NX_O43174"/>
<dbReference type="OpenTargets" id="ENSG00000095596"/>
<dbReference type="PharmGKB" id="PA27098"/>
<dbReference type="VEuPathDB" id="HostDB:ENSG00000095596"/>
<dbReference type="eggNOG" id="KOG0157">
    <property type="taxonomic scope" value="Eukaryota"/>
</dbReference>
<dbReference type="GeneTree" id="ENSGT00800000124060"/>
<dbReference type="HOGENOM" id="CLU_001570_15_6_1"/>
<dbReference type="InParanoid" id="O43174"/>
<dbReference type="OMA" id="KLWNLYC"/>
<dbReference type="OrthoDB" id="1372046at2759"/>
<dbReference type="PAN-GO" id="O43174">
    <property type="GO annotations" value="2 GO annotations based on evolutionary models"/>
</dbReference>
<dbReference type="PhylomeDB" id="O43174"/>
<dbReference type="TreeFam" id="TF105093"/>
<dbReference type="PathwayCommons" id="O43174"/>
<dbReference type="Reactome" id="R-HSA-211916">
    <property type="pathway name" value="Vitamins"/>
</dbReference>
<dbReference type="Reactome" id="R-HSA-5365859">
    <property type="pathway name" value="RA biosynthesis pathway"/>
</dbReference>
<dbReference type="SABIO-RK" id="O43174"/>
<dbReference type="SIGNOR" id="O43174"/>
<dbReference type="BioGRID-ORCS" id="1592">
    <property type="hits" value="12 hits in 1151 CRISPR screens"/>
</dbReference>
<dbReference type="ChiTaRS" id="CYP26A1">
    <property type="organism name" value="human"/>
</dbReference>
<dbReference type="GeneWiki" id="CYP26A1"/>
<dbReference type="GenomeRNAi" id="1592"/>
<dbReference type="Pharos" id="O43174">
    <property type="development level" value="Tchem"/>
</dbReference>
<dbReference type="PRO" id="PR:O43174"/>
<dbReference type="Proteomes" id="UP000005640">
    <property type="component" value="Chromosome 10"/>
</dbReference>
<dbReference type="RNAct" id="O43174">
    <property type="molecule type" value="protein"/>
</dbReference>
<dbReference type="Bgee" id="ENSG00000095596">
    <property type="expression patterns" value="Expressed in cortical plate and 71 other cell types or tissues"/>
</dbReference>
<dbReference type="ExpressionAtlas" id="O43174">
    <property type="expression patterns" value="baseline and differential"/>
</dbReference>
<dbReference type="GO" id="GO:0005789">
    <property type="term" value="C:endoplasmic reticulum membrane"/>
    <property type="evidence" value="ECO:0000304"/>
    <property type="project" value="Reactome"/>
</dbReference>
<dbReference type="GO" id="GO:0062183">
    <property type="term" value="F:all-trans retinoic acid 18-hydroxylase activity"/>
    <property type="evidence" value="ECO:0000314"/>
    <property type="project" value="UniProtKB"/>
</dbReference>
<dbReference type="GO" id="GO:0062182">
    <property type="term" value="F:all-trans retinoic acid 4-hydrolase activity"/>
    <property type="evidence" value="ECO:0007669"/>
    <property type="project" value="RHEA"/>
</dbReference>
<dbReference type="GO" id="GO:0020037">
    <property type="term" value="F:heme binding"/>
    <property type="evidence" value="ECO:0000303"/>
    <property type="project" value="BHF-UCL"/>
</dbReference>
<dbReference type="GO" id="GO:0005506">
    <property type="term" value="F:iron ion binding"/>
    <property type="evidence" value="ECO:0007669"/>
    <property type="project" value="InterPro"/>
</dbReference>
<dbReference type="GO" id="GO:0004497">
    <property type="term" value="F:monooxygenase activity"/>
    <property type="evidence" value="ECO:0000318"/>
    <property type="project" value="GO_Central"/>
</dbReference>
<dbReference type="GO" id="GO:0016709">
    <property type="term" value="F:oxidoreductase activity, acting on paired donors, with incorporation or reduction of molecular oxygen, NAD(P)H as one donor, and incorporation of one atom of oxygen"/>
    <property type="evidence" value="ECO:0000314"/>
    <property type="project" value="UniProtKB"/>
</dbReference>
<dbReference type="GO" id="GO:0019825">
    <property type="term" value="F:oxygen binding"/>
    <property type="evidence" value="ECO:0000304"/>
    <property type="project" value="ProtInc"/>
</dbReference>
<dbReference type="GO" id="GO:0008401">
    <property type="term" value="F:retinoic acid 4-hydroxylase activity"/>
    <property type="evidence" value="ECO:0000314"/>
    <property type="project" value="UniProtKB"/>
</dbReference>
<dbReference type="GO" id="GO:0001972">
    <property type="term" value="F:retinoic acid binding"/>
    <property type="evidence" value="ECO:0000314"/>
    <property type="project" value="BHF-UCL"/>
</dbReference>
<dbReference type="GO" id="GO:0007417">
    <property type="term" value="P:central nervous system development"/>
    <property type="evidence" value="ECO:0000318"/>
    <property type="project" value="GO_Central"/>
</dbReference>
<dbReference type="GO" id="GO:0001822">
    <property type="term" value="P:kidney development"/>
    <property type="evidence" value="ECO:0007669"/>
    <property type="project" value="Ensembl"/>
</dbReference>
<dbReference type="GO" id="GO:0048387">
    <property type="term" value="P:negative regulation of retinoic acid receptor signaling pathway"/>
    <property type="evidence" value="ECO:0000304"/>
    <property type="project" value="BHF-UCL"/>
</dbReference>
<dbReference type="GO" id="GO:0032526">
    <property type="term" value="P:response to retinoic acid"/>
    <property type="evidence" value="ECO:0007669"/>
    <property type="project" value="Ensembl"/>
</dbReference>
<dbReference type="GO" id="GO:0033189">
    <property type="term" value="P:response to vitamin A"/>
    <property type="evidence" value="ECO:0007669"/>
    <property type="project" value="Ensembl"/>
</dbReference>
<dbReference type="GO" id="GO:0034653">
    <property type="term" value="P:retinoic acid catabolic process"/>
    <property type="evidence" value="ECO:0000314"/>
    <property type="project" value="BHF-UCL"/>
</dbReference>
<dbReference type="GO" id="GO:0042573">
    <property type="term" value="P:retinoic acid metabolic process"/>
    <property type="evidence" value="ECO:0000314"/>
    <property type="project" value="UniProtKB"/>
</dbReference>
<dbReference type="GO" id="GO:0006766">
    <property type="term" value="P:vitamin metabolic process"/>
    <property type="evidence" value="ECO:0000304"/>
    <property type="project" value="Reactome"/>
</dbReference>
<dbReference type="GO" id="GO:0006805">
    <property type="term" value="P:xenobiotic metabolic process"/>
    <property type="evidence" value="ECO:0000314"/>
    <property type="project" value="UniProtKB"/>
</dbReference>
<dbReference type="CDD" id="cd20638">
    <property type="entry name" value="CYP26A1"/>
    <property type="match status" value="1"/>
</dbReference>
<dbReference type="FunFam" id="1.10.630.10:FF:000041">
    <property type="entry name" value="Cytochrome P450 26A1 isoform 1"/>
    <property type="match status" value="1"/>
</dbReference>
<dbReference type="Gene3D" id="1.10.630.10">
    <property type="entry name" value="Cytochrome P450"/>
    <property type="match status" value="1"/>
</dbReference>
<dbReference type="InterPro" id="IPR001128">
    <property type="entry name" value="Cyt_P450"/>
</dbReference>
<dbReference type="InterPro" id="IPR017972">
    <property type="entry name" value="Cyt_P450_CS"/>
</dbReference>
<dbReference type="InterPro" id="IPR002403">
    <property type="entry name" value="Cyt_P450_E_grp-IV"/>
</dbReference>
<dbReference type="InterPro" id="IPR036396">
    <property type="entry name" value="Cyt_P450_sf"/>
</dbReference>
<dbReference type="PANTHER" id="PTHR24286">
    <property type="entry name" value="CYTOCHROME P450 26"/>
    <property type="match status" value="1"/>
</dbReference>
<dbReference type="PANTHER" id="PTHR24286:SF101">
    <property type="entry name" value="CYTOCHROME P450 26A1"/>
    <property type="match status" value="1"/>
</dbReference>
<dbReference type="Pfam" id="PF00067">
    <property type="entry name" value="p450"/>
    <property type="match status" value="1"/>
</dbReference>
<dbReference type="PRINTS" id="PR00465">
    <property type="entry name" value="EP450IV"/>
</dbReference>
<dbReference type="PRINTS" id="PR00385">
    <property type="entry name" value="P450"/>
</dbReference>
<dbReference type="SUPFAM" id="SSF48264">
    <property type="entry name" value="Cytochrome P450"/>
    <property type="match status" value="1"/>
</dbReference>
<dbReference type="PROSITE" id="PS00086">
    <property type="entry name" value="CYTOCHROME_P450"/>
    <property type="match status" value="1"/>
</dbReference>
<protein>
    <recommendedName>
        <fullName>Cytochrome P450 26A1</fullName>
        <shortName>CYP26A1</shortName>
        <ecNumber evidence="4 5 6 7">1.14.13.-</ecNumber>
    </recommendedName>
    <alternativeName>
        <fullName>Cytochrome P450 retinoic acid-inactivating 1</fullName>
        <shortName evidence="11">Cytochrome P450RAI</shortName>
        <shortName evidence="11">hP450RAI</shortName>
    </alternativeName>
    <alternativeName>
        <fullName evidence="12">Retinoic acid 4-hydroxylase</fullName>
    </alternativeName>
    <alternativeName>
        <fullName>Retinoic acid-metabolizing cytochrome</fullName>
    </alternativeName>
</protein>
<sequence>MGLPALLASALCTFVLPLLLFLAAIKLWDLYCVSGRDRSCALPLPPGTMGFPFFGETLQMVLQRRKFLQMKRRKYGFIYKTHLFGRPTVRVMGADNVRRILLGEHRLVSVHWPASVRTILGSGCLSNLHDSSHKQRKKVIMRAFSREALECYVPVITEEVGSSLEQWLSCGERGLLVYPEVKRLMFRIAMRILLGCEPQLAGDGDSEQQLVEAFEEMTRNLFSLPIDVPFSGLYRGMKARNLIHARIEQNIRAKICGLRASEAGQGCKDALQLLIEHSWERGERLDMQALKQSSTELLFGGHETTASAATSLITYLGLYPHVLQKVREELKSKGLLCKSNQDNKLDMEILEQLKYIGCVIKETLRLNPPVPGGFRVALKTFELNGYQIPKGWNVIYSICDTHDVAEIFTNKEEFNPDRFMLPHPEDASRFSFIPFGGGLRSCVGKEFAKILLKIFTVELARHCDWQLLNGPPTMKTSPTVYPVDNLPARFTHFHGEI</sequence>
<organism>
    <name type="scientific">Homo sapiens</name>
    <name type="common">Human</name>
    <dbReference type="NCBI Taxonomy" id="9606"/>
    <lineage>
        <taxon>Eukaryota</taxon>
        <taxon>Metazoa</taxon>
        <taxon>Chordata</taxon>
        <taxon>Craniata</taxon>
        <taxon>Vertebrata</taxon>
        <taxon>Euteleostomi</taxon>
        <taxon>Mammalia</taxon>
        <taxon>Eutheria</taxon>
        <taxon>Euarchontoglires</taxon>
        <taxon>Primates</taxon>
        <taxon>Haplorrhini</taxon>
        <taxon>Catarrhini</taxon>
        <taxon>Hominidae</taxon>
        <taxon>Homo</taxon>
    </lineage>
</organism>